<comment type="function">
    <text evidence="3 6">Cytochrome P450 monooxygenase; part of the fragmented gene cluster that mediates the biosynthesis of fusarochromene, a tryptophan-derived metabolite closely related to a group of mycotoxins including fusarochromanone (PubMed:33107888). Within the pathway, fscF catalyzes the epoxidation of desacetylfusarochromene which opens the way to the production of fusarochromanones (Probable). The first step of the pathway is the epimerization of L-tryptophan to D-tryptophan in the presence of the NRPS-like tryptophan epimerase fscC. D-tryptophan is subsequently hydroxylated by the tryptophan 6-hydroxylase fscE to yield 6-hydroxytryptophan. The pyrrole ring undergoes cleavaged by the tryptophan 2,3-dioxygenase fscD and is finally converted to 4-hydroxykyrunenine by the hydrolase fscH. The NRPS-like oxidoreductase fscA reduces the carboxyl group to primary alcohol and the DMATS-type prenyltransferase fscG performs prenylation, followed by the formation of a chromene ring catalyzed by the oxidoreductase fscI, which leads to desacetylfusarochromene. Epoxidation by fscF and rearrangement reactions of chromene double bonds convert compound desacetylfusarochromene to fusarochromanones. Although specific acetyltransferases were not found near the fsc gene cluster, several predicted enzymes containing the N-acetyltransferase superfamily domain are present in the genome of F.equiseti. These predicted enzymes may have the potential to convert desacetylfusarochromene to fusarochromene (Probable).</text>
</comment>
<comment type="cofactor">
    <cofactor evidence="1">
        <name>heme</name>
        <dbReference type="ChEBI" id="CHEBI:30413"/>
    </cofactor>
</comment>
<comment type="pathway">
    <text evidence="6">Secondary metabolite biosynthesis.</text>
</comment>
<comment type="subcellular location">
    <subcellularLocation>
        <location evidence="2">Membrane</location>
        <topology evidence="2">Single-pass membrane protein</topology>
    </subcellularLocation>
</comment>
<comment type="similarity">
    <text evidence="5">Belongs to the cytochrome P450 family.</text>
</comment>
<keyword id="KW-0349">Heme</keyword>
<keyword id="KW-0408">Iron</keyword>
<keyword id="KW-0472">Membrane</keyword>
<keyword id="KW-0479">Metal-binding</keyword>
<keyword id="KW-0503">Monooxygenase</keyword>
<keyword id="KW-0560">Oxidoreductase</keyword>
<keyword id="KW-0812">Transmembrane</keyword>
<keyword id="KW-1133">Transmembrane helix</keyword>
<sequence length="536" mass="60192">MELSLSFPVSWLCALFTAIALYCIAVAFYRLFLHPLAKFPGPFLWKISIWPTVWQCAHGKRHLDLLAAHKRHGPVVRIGPNMLSYNTGSAARTIYASRHANVRKSDFHLTVDASVSAPSLFSIVDREKHAFRRRVVSQAFTEKAMMDASEFYLKYMKVFLDVLHDKVGTGWTKVDIQEHATWWTSDTMGDLSLGRSFNCLTEPTFRHAIPMMRNGLRYIYWAGHLPFRDLVDYILAHPILSRYGGQSAVDNRNYFDFCETAIQERIKEEQDALAAGADEESRRKDYIHYLLAAVDPETGEKLTKNELESDASLLLAAGGDAMSNAIAGIMFYLARHDFARDRATAEIRHQFASAEDIRQGPGLAACTYLEACILESMRMAPPVATSPLERVTVGNGIEVDGHWFPAGITLGVCFYALNFNETIHKDPYRFRPERWLSSEEGITAEDVQQSKSNFFPFSAGHRHCPARNLASRNLKVFIANMLWHFDLRPATSLGVNESSGEEGQTGLFCIEDALISIADGPVLEFKARLGYNASSS</sequence>
<protein>
    <recommendedName>
        <fullName evidence="4">Cytochrome P450 monooxygenase fscF</fullName>
        <ecNumber evidence="6">1.-.-.-</ecNumber>
    </recommendedName>
    <alternativeName>
        <fullName evidence="4">Fusarochromene biosynthesis cluster protein F</fullName>
    </alternativeName>
</protein>
<dbReference type="EC" id="1.-.-.-" evidence="6"/>
<dbReference type="EMBL" id="BK013344">
    <property type="protein sequence ID" value="DAD54579.1"/>
    <property type="molecule type" value="Genomic_DNA"/>
</dbReference>
<dbReference type="SMR" id="A0A823AE30"/>
<dbReference type="GO" id="GO:0016020">
    <property type="term" value="C:membrane"/>
    <property type="evidence" value="ECO:0007669"/>
    <property type="project" value="UniProtKB-SubCell"/>
</dbReference>
<dbReference type="GO" id="GO:0020037">
    <property type="term" value="F:heme binding"/>
    <property type="evidence" value="ECO:0007669"/>
    <property type="project" value="InterPro"/>
</dbReference>
<dbReference type="GO" id="GO:0005506">
    <property type="term" value="F:iron ion binding"/>
    <property type="evidence" value="ECO:0007669"/>
    <property type="project" value="InterPro"/>
</dbReference>
<dbReference type="GO" id="GO:0004497">
    <property type="term" value="F:monooxygenase activity"/>
    <property type="evidence" value="ECO:0007669"/>
    <property type="project" value="UniProtKB-KW"/>
</dbReference>
<dbReference type="GO" id="GO:0016705">
    <property type="term" value="F:oxidoreductase activity, acting on paired donors, with incorporation or reduction of molecular oxygen"/>
    <property type="evidence" value="ECO:0007669"/>
    <property type="project" value="InterPro"/>
</dbReference>
<dbReference type="CDD" id="cd11061">
    <property type="entry name" value="CYP67-like"/>
    <property type="match status" value="1"/>
</dbReference>
<dbReference type="Gene3D" id="1.10.630.10">
    <property type="entry name" value="Cytochrome P450"/>
    <property type="match status" value="1"/>
</dbReference>
<dbReference type="InterPro" id="IPR001128">
    <property type="entry name" value="Cyt_P450"/>
</dbReference>
<dbReference type="InterPro" id="IPR017972">
    <property type="entry name" value="Cyt_P450_CS"/>
</dbReference>
<dbReference type="InterPro" id="IPR002403">
    <property type="entry name" value="Cyt_P450_E_grp-IV"/>
</dbReference>
<dbReference type="InterPro" id="IPR036396">
    <property type="entry name" value="Cyt_P450_sf"/>
</dbReference>
<dbReference type="InterPro" id="IPR050121">
    <property type="entry name" value="Cytochrome_P450_monoxygenase"/>
</dbReference>
<dbReference type="PANTHER" id="PTHR24305">
    <property type="entry name" value="CYTOCHROME P450"/>
    <property type="match status" value="1"/>
</dbReference>
<dbReference type="PANTHER" id="PTHR24305:SF237">
    <property type="entry name" value="CYTOCHROME P450 MONOOXYGENASE ATNE-RELATED"/>
    <property type="match status" value="1"/>
</dbReference>
<dbReference type="Pfam" id="PF00067">
    <property type="entry name" value="p450"/>
    <property type="match status" value="1"/>
</dbReference>
<dbReference type="PRINTS" id="PR00465">
    <property type="entry name" value="EP450IV"/>
</dbReference>
<dbReference type="SUPFAM" id="SSF48264">
    <property type="entry name" value="Cytochrome P450"/>
    <property type="match status" value="1"/>
</dbReference>
<dbReference type="PROSITE" id="PS00086">
    <property type="entry name" value="CYTOCHROME_P450"/>
    <property type="match status" value="1"/>
</dbReference>
<gene>
    <name evidence="4" type="primary">fscF</name>
</gene>
<evidence type="ECO:0000250" key="1">
    <source>
        <dbReference type="UniProtKB" id="P04798"/>
    </source>
</evidence>
<evidence type="ECO:0000255" key="2"/>
<evidence type="ECO:0000269" key="3">
    <source>
    </source>
</evidence>
<evidence type="ECO:0000303" key="4">
    <source>
    </source>
</evidence>
<evidence type="ECO:0000305" key="5"/>
<evidence type="ECO:0000305" key="6">
    <source>
    </source>
</evidence>
<accession>A0A823AE30</accession>
<proteinExistence type="inferred from homology"/>
<name>FSCF_FUSEQ</name>
<feature type="chain" id="PRO_0000461414" description="Cytochrome P450 monooxygenase fscF">
    <location>
        <begin position="1"/>
        <end position="536"/>
    </location>
</feature>
<feature type="transmembrane region" description="Helical" evidence="2">
    <location>
        <begin position="9"/>
        <end position="29"/>
    </location>
</feature>
<feature type="binding site" description="axial binding residue" evidence="1">
    <location>
        <position position="464"/>
    </location>
    <ligand>
        <name>heme</name>
        <dbReference type="ChEBI" id="CHEBI:30413"/>
    </ligand>
    <ligandPart>
        <name>Fe</name>
        <dbReference type="ChEBI" id="CHEBI:18248"/>
    </ligandPart>
</feature>
<organism>
    <name type="scientific">Fusarium equiseti</name>
    <name type="common">Fusarium scirpi</name>
    <dbReference type="NCBI Taxonomy" id="61235"/>
    <lineage>
        <taxon>Eukaryota</taxon>
        <taxon>Fungi</taxon>
        <taxon>Dikarya</taxon>
        <taxon>Ascomycota</taxon>
        <taxon>Pezizomycotina</taxon>
        <taxon>Sordariomycetes</taxon>
        <taxon>Hypocreomycetidae</taxon>
        <taxon>Hypocreales</taxon>
        <taxon>Nectriaceae</taxon>
        <taxon>Fusarium</taxon>
        <taxon>Fusarium incarnatum-equiseti species complex</taxon>
    </lineage>
</organism>
<reference key="1">
    <citation type="journal article" date="2021" name="Org. Biomol. Chem.">
        <title>Fusarochromene, a novel tryptophan-derived metabolite from Fusarium sacchari.</title>
        <authorList>
            <person name="Marshall J.W."/>
            <person name="de Mattos-Shipley K.M.J."/>
            <person name="Ghannam I.A.Y."/>
            <person name="Munawar A."/>
            <person name="Killen J.C."/>
            <person name="Lazarus C.M."/>
            <person name="Cox R.J."/>
            <person name="Willis C.L."/>
            <person name="Simpson T.J."/>
        </authorList>
    </citation>
    <scope>NUCLEOTIDE SEQUENCE [GENOMIC DNA]</scope>
    <scope>FUNCTION</scope>
    <scope>PATHWAY</scope>
</reference>